<feature type="chain" id="PRO_0000246097" description="Probable Fe(2+)-trafficking protein">
    <location>
        <begin position="1"/>
        <end position="91"/>
    </location>
</feature>
<proteinExistence type="inferred from homology"/>
<protein>
    <recommendedName>
        <fullName evidence="1">Probable Fe(2+)-trafficking protein</fullName>
    </recommendedName>
</protein>
<keyword id="KW-0408">Iron</keyword>
<accession>Q2SXI2</accession>
<name>FETP_BURTA</name>
<sequence>MARMIHCAKLGKEAEGLDFPPLPGELGKRLYESVSKEAWQGWLKQQTMLINENRLNMADPRARQYLMKQTEKYFFGEGADQASGYVPPAQD</sequence>
<dbReference type="EMBL" id="CP000086">
    <property type="protein sequence ID" value="ABC36777.1"/>
    <property type="molecule type" value="Genomic_DNA"/>
</dbReference>
<dbReference type="RefSeq" id="WP_009890128.1">
    <property type="nucleotide sequence ID" value="NZ_CP008785.1"/>
</dbReference>
<dbReference type="SMR" id="Q2SXI2"/>
<dbReference type="GeneID" id="45121568"/>
<dbReference type="KEGG" id="bte:BTH_I1836"/>
<dbReference type="HOGENOM" id="CLU_170994_0_0_4"/>
<dbReference type="Proteomes" id="UP000001930">
    <property type="component" value="Chromosome I"/>
</dbReference>
<dbReference type="GO" id="GO:0005829">
    <property type="term" value="C:cytosol"/>
    <property type="evidence" value="ECO:0007669"/>
    <property type="project" value="TreeGrafter"/>
</dbReference>
<dbReference type="GO" id="GO:0005506">
    <property type="term" value="F:iron ion binding"/>
    <property type="evidence" value="ECO:0007669"/>
    <property type="project" value="UniProtKB-UniRule"/>
</dbReference>
<dbReference type="GO" id="GO:0034599">
    <property type="term" value="P:cellular response to oxidative stress"/>
    <property type="evidence" value="ECO:0007669"/>
    <property type="project" value="TreeGrafter"/>
</dbReference>
<dbReference type="FunFam" id="1.10.3880.10:FF:000001">
    <property type="entry name" value="Probable Fe(2+)-trafficking protein"/>
    <property type="match status" value="1"/>
</dbReference>
<dbReference type="Gene3D" id="1.10.3880.10">
    <property type="entry name" value="Fe(II) trafficking protein YggX"/>
    <property type="match status" value="1"/>
</dbReference>
<dbReference type="HAMAP" id="MF_00686">
    <property type="entry name" value="Fe_traffic_YggX"/>
    <property type="match status" value="1"/>
</dbReference>
<dbReference type="InterPro" id="IPR007457">
    <property type="entry name" value="Fe_traffick_prot_YggX"/>
</dbReference>
<dbReference type="InterPro" id="IPR036766">
    <property type="entry name" value="Fe_traffick_prot_YggX_sf"/>
</dbReference>
<dbReference type="NCBIfam" id="NF003817">
    <property type="entry name" value="PRK05408.1"/>
    <property type="match status" value="1"/>
</dbReference>
<dbReference type="PANTHER" id="PTHR36965">
    <property type="entry name" value="FE(2+)-TRAFFICKING PROTEIN-RELATED"/>
    <property type="match status" value="1"/>
</dbReference>
<dbReference type="PANTHER" id="PTHR36965:SF1">
    <property type="entry name" value="FE(2+)-TRAFFICKING PROTEIN-RELATED"/>
    <property type="match status" value="1"/>
</dbReference>
<dbReference type="Pfam" id="PF04362">
    <property type="entry name" value="Iron_traffic"/>
    <property type="match status" value="1"/>
</dbReference>
<dbReference type="PIRSF" id="PIRSF029827">
    <property type="entry name" value="Fe_traffic_YggX"/>
    <property type="match status" value="1"/>
</dbReference>
<dbReference type="SUPFAM" id="SSF111148">
    <property type="entry name" value="YggX-like"/>
    <property type="match status" value="1"/>
</dbReference>
<organism>
    <name type="scientific">Burkholderia thailandensis (strain ATCC 700388 / DSM 13276 / CCUG 48851 / CIP 106301 / E264)</name>
    <dbReference type="NCBI Taxonomy" id="271848"/>
    <lineage>
        <taxon>Bacteria</taxon>
        <taxon>Pseudomonadati</taxon>
        <taxon>Pseudomonadota</taxon>
        <taxon>Betaproteobacteria</taxon>
        <taxon>Burkholderiales</taxon>
        <taxon>Burkholderiaceae</taxon>
        <taxon>Burkholderia</taxon>
        <taxon>pseudomallei group</taxon>
    </lineage>
</organism>
<gene>
    <name type="ordered locus">BTH_I1836</name>
</gene>
<reference key="1">
    <citation type="journal article" date="2005" name="BMC Genomics">
        <title>Bacterial genome adaptation to niches: divergence of the potential virulence genes in three Burkholderia species of different survival strategies.</title>
        <authorList>
            <person name="Kim H.S."/>
            <person name="Schell M.A."/>
            <person name="Yu Y."/>
            <person name="Ulrich R.L."/>
            <person name="Sarria S.H."/>
            <person name="Nierman W.C."/>
            <person name="DeShazer D."/>
        </authorList>
    </citation>
    <scope>NUCLEOTIDE SEQUENCE [LARGE SCALE GENOMIC DNA]</scope>
    <source>
        <strain>ATCC 700388 / DSM 13276 / CCUG 48851 / CIP 106301 / E264</strain>
    </source>
</reference>
<comment type="function">
    <text evidence="1">Could be a mediator in iron transactions between iron acquisition and iron-requiring processes, such as synthesis and/or repair of Fe-S clusters in biosynthetic enzymes.</text>
</comment>
<comment type="similarity">
    <text evidence="1">Belongs to the Fe(2+)-trafficking protein family.</text>
</comment>
<evidence type="ECO:0000255" key="1">
    <source>
        <dbReference type="HAMAP-Rule" id="MF_00686"/>
    </source>
</evidence>